<proteinExistence type="inferred from homology"/>
<gene>
    <name type="ordered locus">GTNG_0551</name>
</gene>
<accession>A4IKS9</accession>
<reference key="1">
    <citation type="journal article" date="2007" name="Proc. Natl. Acad. Sci. U.S.A.">
        <title>Genome and proteome of long-chain alkane degrading Geobacillus thermodenitrificans NG80-2 isolated from a deep-subsurface oil reservoir.</title>
        <authorList>
            <person name="Feng L."/>
            <person name="Wang W."/>
            <person name="Cheng J."/>
            <person name="Ren Y."/>
            <person name="Zhao G."/>
            <person name="Gao C."/>
            <person name="Tang Y."/>
            <person name="Liu X."/>
            <person name="Han W."/>
            <person name="Peng X."/>
            <person name="Liu R."/>
            <person name="Wang L."/>
        </authorList>
    </citation>
    <scope>NUCLEOTIDE SEQUENCE [LARGE SCALE GENOMIC DNA]</scope>
    <source>
        <strain>NG80-2</strain>
    </source>
</reference>
<comment type="similarity">
    <text evidence="1">Belongs to the UPF0342 family.</text>
</comment>
<feature type="chain" id="PRO_0000296974" description="UPF0342 protein GTNG_0551">
    <location>
        <begin position="1"/>
        <end position="119"/>
    </location>
</feature>
<sequence length="119" mass="13825">MSESLHALARQLEQAIRASQPFQQLKQAYEDVRRDETAYQMFANFRDIQLRLHEKQMRGAAILPDEIEQAQKAMALAQQNAKLARLMALEQQMSMTIAEVQQIAMKPLEELHRSLMEEK</sequence>
<dbReference type="EMBL" id="CP000557">
    <property type="protein sequence ID" value="ABO65933.1"/>
    <property type="molecule type" value="Genomic_DNA"/>
</dbReference>
<dbReference type="RefSeq" id="WP_008881602.1">
    <property type="nucleotide sequence ID" value="NC_009328.1"/>
</dbReference>
<dbReference type="SMR" id="A4IKS9"/>
<dbReference type="KEGG" id="gtn:GTNG_0551"/>
<dbReference type="eggNOG" id="COG3679">
    <property type="taxonomic scope" value="Bacteria"/>
</dbReference>
<dbReference type="HOGENOM" id="CLU_140243_3_0_9"/>
<dbReference type="Proteomes" id="UP000001578">
    <property type="component" value="Chromosome"/>
</dbReference>
<dbReference type="Gene3D" id="1.20.1500.10">
    <property type="entry name" value="YheA/YmcA-like"/>
    <property type="match status" value="1"/>
</dbReference>
<dbReference type="HAMAP" id="MF_01526">
    <property type="entry name" value="UPF0342"/>
    <property type="match status" value="1"/>
</dbReference>
<dbReference type="InterPro" id="IPR010368">
    <property type="entry name" value="Com_YlbF"/>
</dbReference>
<dbReference type="InterPro" id="IPR023378">
    <property type="entry name" value="YheA/YmcA-like_dom_sf"/>
</dbReference>
<dbReference type="Pfam" id="PF06133">
    <property type="entry name" value="Com_YlbF"/>
    <property type="match status" value="1"/>
</dbReference>
<dbReference type="SUPFAM" id="SSF158622">
    <property type="entry name" value="YheA/YmcA-like"/>
    <property type="match status" value="1"/>
</dbReference>
<evidence type="ECO:0000255" key="1">
    <source>
        <dbReference type="HAMAP-Rule" id="MF_01526"/>
    </source>
</evidence>
<organism>
    <name type="scientific">Geobacillus thermodenitrificans (strain NG80-2)</name>
    <dbReference type="NCBI Taxonomy" id="420246"/>
    <lineage>
        <taxon>Bacteria</taxon>
        <taxon>Bacillati</taxon>
        <taxon>Bacillota</taxon>
        <taxon>Bacilli</taxon>
        <taxon>Bacillales</taxon>
        <taxon>Anoxybacillaceae</taxon>
        <taxon>Geobacillus</taxon>
    </lineage>
</organism>
<protein>
    <recommendedName>
        <fullName evidence="1">UPF0342 protein GTNG_0551</fullName>
    </recommendedName>
</protein>
<name>Y551_GEOTN</name>